<organism>
    <name type="scientific">Brucella melitensis biotype 1 (strain ATCC 23456 / CCUG 17765 / NCTC 10094 / 16M)</name>
    <dbReference type="NCBI Taxonomy" id="224914"/>
    <lineage>
        <taxon>Bacteria</taxon>
        <taxon>Pseudomonadati</taxon>
        <taxon>Pseudomonadota</taxon>
        <taxon>Alphaproteobacteria</taxon>
        <taxon>Hyphomicrobiales</taxon>
        <taxon>Brucellaceae</taxon>
        <taxon>Brucella/Ochrobactrum group</taxon>
        <taxon>Brucella</taxon>
    </lineage>
</organism>
<comment type="function">
    <text evidence="1">Methyltransferase required for the conversion of demethylmenaquinol (DMKH2) to menaquinol (MKH2) and the conversion of 2-polyprenyl-6-methoxy-1,4-benzoquinol (DDMQH2) to 2-polyprenyl-3-methyl-6-methoxy-1,4-benzoquinol (DMQH2).</text>
</comment>
<comment type="catalytic activity">
    <reaction evidence="1">
        <text>a 2-demethylmenaquinol + S-adenosyl-L-methionine = a menaquinol + S-adenosyl-L-homocysteine + H(+)</text>
        <dbReference type="Rhea" id="RHEA:42640"/>
        <dbReference type="Rhea" id="RHEA-COMP:9539"/>
        <dbReference type="Rhea" id="RHEA-COMP:9563"/>
        <dbReference type="ChEBI" id="CHEBI:15378"/>
        <dbReference type="ChEBI" id="CHEBI:18151"/>
        <dbReference type="ChEBI" id="CHEBI:55437"/>
        <dbReference type="ChEBI" id="CHEBI:57856"/>
        <dbReference type="ChEBI" id="CHEBI:59789"/>
        <dbReference type="EC" id="2.1.1.163"/>
    </reaction>
</comment>
<comment type="catalytic activity">
    <reaction evidence="1">
        <text>a 2-methoxy-6-(all-trans-polyprenyl)benzene-1,4-diol + S-adenosyl-L-methionine = a 5-methoxy-2-methyl-3-(all-trans-polyprenyl)benzene-1,4-diol + S-adenosyl-L-homocysteine + H(+)</text>
        <dbReference type="Rhea" id="RHEA:28286"/>
        <dbReference type="Rhea" id="RHEA-COMP:10858"/>
        <dbReference type="Rhea" id="RHEA-COMP:10859"/>
        <dbReference type="ChEBI" id="CHEBI:15378"/>
        <dbReference type="ChEBI" id="CHEBI:57856"/>
        <dbReference type="ChEBI" id="CHEBI:59789"/>
        <dbReference type="ChEBI" id="CHEBI:84166"/>
        <dbReference type="ChEBI" id="CHEBI:84167"/>
        <dbReference type="EC" id="2.1.1.201"/>
    </reaction>
</comment>
<comment type="pathway">
    <text evidence="1">Quinol/quinone metabolism; menaquinone biosynthesis; menaquinol from 1,4-dihydroxy-2-naphthoate: step 2/2.</text>
</comment>
<comment type="pathway">
    <text evidence="1">Cofactor biosynthesis; ubiquinone biosynthesis.</text>
</comment>
<comment type="similarity">
    <text evidence="1">Belongs to the class I-like SAM-binding methyltransferase superfamily. MenG/UbiE family.</text>
</comment>
<gene>
    <name evidence="1" type="primary">ubiE</name>
    <name type="ordered locus">BMEII0233</name>
</gene>
<name>UBIE_BRUME</name>
<sequence>MSQQNGNVNRVGAQDRVGASGGMEHSFGFKAVDENEKQGLVNDVFHKVAKRYDIMNDLMSAGMHRVWKDAMVAWLAPSKRPGWTSLDVAGGTGDIAFRIVEASGRQAHVTILDINGSMLGVGRERAIKKGLIDNLEFVEANAEELPFEDNSFDAYTIAFGIRNVPHIDKALSEAYRVLKPGGRFLCLEFSEVELPVLDKVYDEWSFRAIPRIGKMITGDADSYSYLVESIRKFPKQQDFAAMIEKAGFERVSYRNFTGGIAALHSGWKL</sequence>
<reference key="1">
    <citation type="journal article" date="2002" name="Proc. Natl. Acad. Sci. U.S.A.">
        <title>The genome sequence of the facultative intracellular pathogen Brucella melitensis.</title>
        <authorList>
            <person name="DelVecchio V.G."/>
            <person name="Kapatral V."/>
            <person name="Redkar R.J."/>
            <person name="Patra G."/>
            <person name="Mujer C."/>
            <person name="Los T."/>
            <person name="Ivanova N."/>
            <person name="Anderson I."/>
            <person name="Bhattacharyya A."/>
            <person name="Lykidis A."/>
            <person name="Reznik G."/>
            <person name="Jablonski L."/>
            <person name="Larsen N."/>
            <person name="D'Souza M."/>
            <person name="Bernal A."/>
            <person name="Mazur M."/>
            <person name="Goltsman E."/>
            <person name="Selkov E."/>
            <person name="Elzer P.H."/>
            <person name="Hagius S."/>
            <person name="O'Callaghan D."/>
            <person name="Letesson J.-J."/>
            <person name="Haselkorn R."/>
            <person name="Kyrpides N.C."/>
            <person name="Overbeek R."/>
        </authorList>
    </citation>
    <scope>NUCLEOTIDE SEQUENCE [LARGE SCALE GENOMIC DNA]</scope>
    <source>
        <strain>ATCC 23456 / CCUG 17765 / NCTC 10094 / 16M</strain>
    </source>
</reference>
<proteinExistence type="inferred from homology"/>
<evidence type="ECO:0000255" key="1">
    <source>
        <dbReference type="HAMAP-Rule" id="MF_01813"/>
    </source>
</evidence>
<keyword id="KW-0474">Menaquinone biosynthesis</keyword>
<keyword id="KW-0489">Methyltransferase</keyword>
<keyword id="KW-0949">S-adenosyl-L-methionine</keyword>
<keyword id="KW-0808">Transferase</keyword>
<keyword id="KW-0831">Ubiquinone biosynthesis</keyword>
<dbReference type="EC" id="2.1.1.163" evidence="1"/>
<dbReference type="EC" id="2.1.1.201" evidence="1"/>
<dbReference type="EMBL" id="AE008918">
    <property type="protein sequence ID" value="AAL53474.1"/>
    <property type="molecule type" value="Genomic_DNA"/>
</dbReference>
<dbReference type="PIR" id="AG3538">
    <property type="entry name" value="AG3538"/>
</dbReference>
<dbReference type="RefSeq" id="WP_002965588.1">
    <property type="nucleotide sequence ID" value="NZ_GG703779.1"/>
</dbReference>
<dbReference type="SMR" id="Q8YDE4"/>
<dbReference type="GeneID" id="97534890"/>
<dbReference type="KEGG" id="bme:BMEII0233"/>
<dbReference type="KEGG" id="bmel:DK63_3008"/>
<dbReference type="PATRIC" id="fig|224914.52.peg.3154"/>
<dbReference type="eggNOG" id="COG2226">
    <property type="taxonomic scope" value="Bacteria"/>
</dbReference>
<dbReference type="PhylomeDB" id="Q8YDE4"/>
<dbReference type="UniPathway" id="UPA00079">
    <property type="reaction ID" value="UER00169"/>
</dbReference>
<dbReference type="UniPathway" id="UPA00232"/>
<dbReference type="Proteomes" id="UP000000419">
    <property type="component" value="Chromosome II"/>
</dbReference>
<dbReference type="GO" id="GO:0008425">
    <property type="term" value="F:2-methoxy-6-polyprenyl-1,4-benzoquinol methyltransferase activity"/>
    <property type="evidence" value="ECO:0007669"/>
    <property type="project" value="UniProtKB-UniRule"/>
</dbReference>
<dbReference type="GO" id="GO:0043770">
    <property type="term" value="F:demethylmenaquinone methyltransferase activity"/>
    <property type="evidence" value="ECO:0007669"/>
    <property type="project" value="UniProtKB-UniRule"/>
</dbReference>
<dbReference type="GO" id="GO:0009060">
    <property type="term" value="P:aerobic respiration"/>
    <property type="evidence" value="ECO:0007669"/>
    <property type="project" value="UniProtKB-UniRule"/>
</dbReference>
<dbReference type="GO" id="GO:0009234">
    <property type="term" value="P:menaquinone biosynthetic process"/>
    <property type="evidence" value="ECO:0007669"/>
    <property type="project" value="UniProtKB-UniRule"/>
</dbReference>
<dbReference type="GO" id="GO:0032259">
    <property type="term" value="P:methylation"/>
    <property type="evidence" value="ECO:0007669"/>
    <property type="project" value="UniProtKB-KW"/>
</dbReference>
<dbReference type="CDD" id="cd02440">
    <property type="entry name" value="AdoMet_MTases"/>
    <property type="match status" value="1"/>
</dbReference>
<dbReference type="FunFam" id="3.40.50.150:FF:000064">
    <property type="entry name" value="2-methoxy-6-polyprenyl-1,4-benzoquinol methylase, mitochondrial"/>
    <property type="match status" value="1"/>
</dbReference>
<dbReference type="Gene3D" id="3.40.50.150">
    <property type="entry name" value="Vaccinia Virus protein VP39"/>
    <property type="match status" value="1"/>
</dbReference>
<dbReference type="HAMAP" id="MF_01813">
    <property type="entry name" value="MenG_UbiE_methyltr"/>
    <property type="match status" value="1"/>
</dbReference>
<dbReference type="InterPro" id="IPR029063">
    <property type="entry name" value="SAM-dependent_MTases_sf"/>
</dbReference>
<dbReference type="InterPro" id="IPR004033">
    <property type="entry name" value="UbiE/COQ5_MeTrFase"/>
</dbReference>
<dbReference type="InterPro" id="IPR023576">
    <property type="entry name" value="UbiE/COQ5_MeTrFase_CS"/>
</dbReference>
<dbReference type="NCBIfam" id="TIGR01934">
    <property type="entry name" value="MenG_MenH_UbiE"/>
    <property type="match status" value="1"/>
</dbReference>
<dbReference type="NCBIfam" id="NF001242">
    <property type="entry name" value="PRK00216.1-3"/>
    <property type="match status" value="1"/>
</dbReference>
<dbReference type="NCBIfam" id="NF001244">
    <property type="entry name" value="PRK00216.1-5"/>
    <property type="match status" value="1"/>
</dbReference>
<dbReference type="PANTHER" id="PTHR43591:SF24">
    <property type="entry name" value="2-METHOXY-6-POLYPRENYL-1,4-BENZOQUINOL METHYLASE, MITOCHONDRIAL"/>
    <property type="match status" value="1"/>
</dbReference>
<dbReference type="PANTHER" id="PTHR43591">
    <property type="entry name" value="METHYLTRANSFERASE"/>
    <property type="match status" value="1"/>
</dbReference>
<dbReference type="Pfam" id="PF01209">
    <property type="entry name" value="Ubie_methyltran"/>
    <property type="match status" value="1"/>
</dbReference>
<dbReference type="SUPFAM" id="SSF53335">
    <property type="entry name" value="S-adenosyl-L-methionine-dependent methyltransferases"/>
    <property type="match status" value="1"/>
</dbReference>
<dbReference type="PROSITE" id="PS51608">
    <property type="entry name" value="SAM_MT_UBIE"/>
    <property type="match status" value="1"/>
</dbReference>
<dbReference type="PROSITE" id="PS01183">
    <property type="entry name" value="UBIE_1"/>
    <property type="match status" value="1"/>
</dbReference>
<dbReference type="PROSITE" id="PS01184">
    <property type="entry name" value="UBIE_2"/>
    <property type="match status" value="1"/>
</dbReference>
<feature type="chain" id="PRO_0000193256" description="Ubiquinone/menaquinone biosynthesis C-methyltransferase UbiE">
    <location>
        <begin position="1"/>
        <end position="269"/>
    </location>
</feature>
<feature type="binding site" evidence="1">
    <location>
        <position position="92"/>
    </location>
    <ligand>
        <name>S-adenosyl-L-methionine</name>
        <dbReference type="ChEBI" id="CHEBI:59789"/>
    </ligand>
</feature>
<feature type="binding site" evidence="1">
    <location>
        <position position="113"/>
    </location>
    <ligand>
        <name>S-adenosyl-L-methionine</name>
        <dbReference type="ChEBI" id="CHEBI:59789"/>
    </ligand>
</feature>
<feature type="binding site" evidence="1">
    <location>
        <begin position="141"/>
        <end position="142"/>
    </location>
    <ligand>
        <name>S-adenosyl-L-methionine</name>
        <dbReference type="ChEBI" id="CHEBI:59789"/>
    </ligand>
</feature>
<accession>Q8YDE4</accession>
<protein>
    <recommendedName>
        <fullName evidence="1">Ubiquinone/menaquinone biosynthesis C-methyltransferase UbiE</fullName>
        <ecNumber evidence="1">2.1.1.163</ecNumber>
        <ecNumber evidence="1">2.1.1.201</ecNumber>
    </recommendedName>
    <alternativeName>
        <fullName evidence="1">2-methoxy-6-polyprenyl-1,4-benzoquinol methylase</fullName>
    </alternativeName>
    <alternativeName>
        <fullName evidence="1">Demethylmenaquinone methyltransferase</fullName>
    </alternativeName>
</protein>